<proteinExistence type="inferred from homology"/>
<geneLocation type="chloroplast"/>
<organism>
    <name type="scientific">Morus indica</name>
    <name type="common">Mulberry</name>
    <dbReference type="NCBI Taxonomy" id="248361"/>
    <lineage>
        <taxon>Eukaryota</taxon>
        <taxon>Viridiplantae</taxon>
        <taxon>Streptophyta</taxon>
        <taxon>Embryophyta</taxon>
        <taxon>Tracheophyta</taxon>
        <taxon>Spermatophyta</taxon>
        <taxon>Magnoliopsida</taxon>
        <taxon>eudicotyledons</taxon>
        <taxon>Gunneridae</taxon>
        <taxon>Pentapetalae</taxon>
        <taxon>rosids</taxon>
        <taxon>fabids</taxon>
        <taxon>Rosales</taxon>
        <taxon>Moraceae</taxon>
        <taxon>Moreae</taxon>
        <taxon>Morus</taxon>
    </lineage>
</organism>
<gene>
    <name evidence="1" type="primary">ycf2-A</name>
    <name type="ordered locus">MoinCp064</name>
</gene>
<gene>
    <name evidence="1" type="primary">ycf2-B</name>
    <name type="ordered locus">MoinCp082</name>
</gene>
<keyword id="KW-0067">ATP-binding</keyword>
<keyword id="KW-0150">Chloroplast</keyword>
<keyword id="KW-0547">Nucleotide-binding</keyword>
<keyword id="KW-0934">Plastid</keyword>
<name>YCF2_MORIN</name>
<accession>Q09WV7</accession>
<sequence length="2292" mass="269856">MKGHQFKSWIFELREILREIKNSHYFLDSWTQLNSVVSFIHIFFHQERFIKLLDSRIWSILLSRNSHLQGSTSNRYLTIKGVVLFVVSVLIYRINNRKMVERKNLYLTGLLPIPMNFIGPRNDTLEESFGSSNINRLIVSLLYLPKGKKISESCFLDPKESTWVLPITKKCIMPESNWGSRWWRNWLGKKRDSSCKISNETVTGIEISFKEKDIKYLEFLFVYYMDDPIRKDHDWELFDRLSPRKRRNIINLNSGQLFEILVKDWICYLMFAFREKIPIEAEGFFKQQGAGSTIQSNDIEHVSHLFSRNKWAISLQNCAQFHMWQFRQDLFFSWGKNPHESDFLRNISRENWIWLDNVWLENKDRFFSKVRNVSSNIQYDSTRSSFVQVTDFSQLKGSSDRSRDHFDSIRNEDSEYHTLINQREIQQLKERSILWDPSFLQMERTEIESDRSPKCLSGYSSMSRLFTEREKQMNNHLLPEEIEEFLVLGNRTRSIRSFFSDRWSELHLGSNPTERSTRDHKLLKKEQDVSFVPSRRSENKEIVNIFKIITYLQNTVSIHPISSDPGCDMVPKDELDMDSSNKISFLNKNPFFDLFHLFHDRNRGGYTLHHDFESEERFQEMADLFTLSITEPDLVYHKGFALSIDSYRLDQKQFLNEVFNSRDESKKKSLLVLPPIFYEENESFYRRIRKKWVRTSCGNDLEDPKPKIVVFASNNIMEAVNQYRLIRNLIQIQYSTYGYIRNVLNRFLLMNRSDRNFEYGIQRDQIGNDTLNHRTIMKYTINQHLSNLKKSQKKWFDPLIFISRTERSMNRDPNAYRYKWSNGSKNLQEHLEHFISEQKSRFQVVFDRLRINQYSIDWSEVIDKKDLSKSLPFFLSKLLLFLSKFLLFLSNSLPFFFVSFGNIPIHRSEIHIYELKGPNDQLCNQLLESIGLQIVHLKKLKPFLLDDHDTSQKSKFLINGGTISPFLFNKIPKWMIDSFHTRKNRRKSFDNTDSYFSMISHDQDNWLNPVKPFHRSSLISSFYKANRLRFLNNPHHFCFYCNKRFPFYVEKARINNYDFTYGQFLNILFIRNKIFSLRGGKKKYAFLERDTISPIELQVSNIFIPNDFPQNGDERYNFYKSFHFPIRSDPFVRRAIYSIADISGTLLTEGQIVNFERTYCQPLSDMNLSDSEGKNLHQYLNFNSNMGLIHTPCSEKYLPSEKRKKRGLCLKKCLEKGQMYRTFQRDSAFSTLSKWNIFQTYMPWFLTSTGYNYLNLLFLDTFSDLLPILSSSQKFVSIFHDIMHGLDISWRILQKRLCLPQWNLISEISSKCLHNLLLSKEMIHRNNESPLISTHLRSPNVREFLYSILFLLLVAGYLVRTHLLFVSRTYSELQTEFERVKSLMIPSYMIELRKLLDRYPTSELNSFWLKNLFLVAREQLGDSLEEIRGSASGGNMLWGGGPTYGVKSIRSKKKYLNINLIDIIDFISIIPNPINRIAFSRNTRHLSHISKETYSLIRKRKKVNGDWIDDKIESWVSNSDSVDDKEREFLVQFSTLTTEKRIDQILLSLTQSDHLSKNDSGYQMIEQPGAIYLRYLVDIHKKYLMNYEFNTSCLAERRIFLAHYQTITYSQTSCGANSFHFPSHGKPFSLRLALSLSRGILVIGSIGTGRSYLVKYLATNSYVPFITVFLNKFLDNKPKGFLIDDSDDIDDSDDIDRDLDTELELLTMMNALTMDMMPEIDRFYITLQFELAKAMSPCIIWIPNIHDLDVNESNYLSLGLLVNYLSRDCERCSTRNILVIASTHIPQKVDPALIAPNKLNTCIKIRRLLIPQQRKHFFTLSYTRGFHLEKKMFHTNGFGSITMGSNVRDLVALTNEALSISITQKKSIIDTNIIRSAFHRQTWDLRSQVRSVQDHGILFYQIGRAVAQNVLLSNCSIDPISIYMKKKSCNEGDSYLYKWYFELGTSMKKLTILLYLLSCSAGSVAQDLWSLPELDEKNGITSYGLVENDSDLVHGLLEVEGTLVGSSRTEKDCSQFDNDRATLLLRPEPRNPLDMMQNGSCSIVDQRFLYEQYKSEFEEGEGEGVLDPQRIEEDLFNHIVWAPRIWRPWGFLFDCIESPNELGFPYWARSFRGKRIIYDEEDGLQENDSEFLQSGTMQYQTRDRSSKEQGFFRISQFIWDPADPLFFLFKDQPFVSVFSHREFFADEEMSKGLLTSQTDLPTSIYKRWFIKNTQEKYFELLIYRQRWLRTNSSLSNGFFRSNTPSESYQYLSKLFLSNGTLLDQMTKTLLRKRWLFPDEMVLAICYNNESLV</sequence>
<protein>
    <recommendedName>
        <fullName evidence="1">Protein Ycf2</fullName>
    </recommendedName>
</protein>
<evidence type="ECO:0000255" key="1">
    <source>
        <dbReference type="HAMAP-Rule" id="MF_01330"/>
    </source>
</evidence>
<dbReference type="EMBL" id="DQ226511">
    <property type="protein sequence ID" value="ABB21000.1"/>
    <property type="molecule type" value="Genomic_DNA"/>
</dbReference>
<dbReference type="EMBL" id="DQ226511">
    <property type="protein sequence ID" value="ABB21017.1"/>
    <property type="molecule type" value="Genomic_DNA"/>
</dbReference>
<dbReference type="GO" id="GO:0009570">
    <property type="term" value="C:chloroplast stroma"/>
    <property type="evidence" value="ECO:0007669"/>
    <property type="project" value="UniProtKB-SubCell"/>
</dbReference>
<dbReference type="GO" id="GO:0005524">
    <property type="term" value="F:ATP binding"/>
    <property type="evidence" value="ECO:0007669"/>
    <property type="project" value="UniProtKB-KW"/>
</dbReference>
<dbReference type="GO" id="GO:0016887">
    <property type="term" value="F:ATP hydrolysis activity"/>
    <property type="evidence" value="ECO:0007669"/>
    <property type="project" value="InterPro"/>
</dbReference>
<dbReference type="CDD" id="cd19505">
    <property type="entry name" value="RecA-like_Ycf2"/>
    <property type="match status" value="1"/>
</dbReference>
<dbReference type="Gene3D" id="3.40.50.300">
    <property type="entry name" value="P-loop containing nucleotide triphosphate hydrolases"/>
    <property type="match status" value="1"/>
</dbReference>
<dbReference type="HAMAP" id="MF_01330">
    <property type="entry name" value="Ycf2"/>
    <property type="match status" value="1"/>
</dbReference>
<dbReference type="InterPro" id="IPR003593">
    <property type="entry name" value="AAA+_ATPase"/>
</dbReference>
<dbReference type="InterPro" id="IPR003959">
    <property type="entry name" value="ATPase_AAA_core"/>
</dbReference>
<dbReference type="InterPro" id="IPR027417">
    <property type="entry name" value="P-loop_NTPase"/>
</dbReference>
<dbReference type="InterPro" id="IPR008543">
    <property type="entry name" value="Uncharacterised_Ycf2"/>
</dbReference>
<dbReference type="InterPro" id="IPR056777">
    <property type="entry name" value="Ycf2_N"/>
</dbReference>
<dbReference type="PANTHER" id="PTHR33078:SF92">
    <property type="entry name" value="PROTEIN YCF2"/>
    <property type="match status" value="1"/>
</dbReference>
<dbReference type="PANTHER" id="PTHR33078">
    <property type="entry name" value="PROTEIN YCF2-RELATED"/>
    <property type="match status" value="1"/>
</dbReference>
<dbReference type="Pfam" id="PF00004">
    <property type="entry name" value="AAA"/>
    <property type="match status" value="1"/>
</dbReference>
<dbReference type="Pfam" id="PF05695">
    <property type="entry name" value="Ycf2"/>
    <property type="match status" value="1"/>
</dbReference>
<dbReference type="SMART" id="SM00382">
    <property type="entry name" value="AAA"/>
    <property type="match status" value="1"/>
</dbReference>
<dbReference type="SUPFAM" id="SSF52540">
    <property type="entry name" value="P-loop containing nucleoside triphosphate hydrolases"/>
    <property type="match status" value="1"/>
</dbReference>
<reference key="1">
    <citation type="submission" date="2005-09" db="EMBL/GenBank/DDBJ databases">
        <title>The chloroplast genome of mulberry: structural features and comparative analysis.</title>
        <authorList>
            <person name="Ravi V."/>
            <person name="Khurana J.P."/>
            <person name="Tyagi A.K."/>
            <person name="Khurana P."/>
        </authorList>
    </citation>
    <scope>NUCLEOTIDE SEQUENCE [LARGE SCALE GENOMIC DNA]</scope>
    <source>
        <strain>cv. K2</strain>
    </source>
</reference>
<feature type="chain" id="PRO_0000276554" description="Protein Ycf2">
    <location>
        <begin position="1"/>
        <end position="2292"/>
    </location>
</feature>
<feature type="binding site" evidence="1">
    <location>
        <begin position="1644"/>
        <end position="1651"/>
    </location>
    <ligand>
        <name>ATP</name>
        <dbReference type="ChEBI" id="CHEBI:30616"/>
    </ligand>
</feature>
<comment type="function">
    <text>Probable ATPase of unknown function. Its presence in a non-photosynthetic plant (Epifagus virginiana) and experiments in tobacco indicate that it has an essential function which is probably not related to photosynthesis.</text>
</comment>
<comment type="subcellular location">
    <subcellularLocation>
        <location evidence="1">Plastid</location>
        <location evidence="1">Chloroplast stroma</location>
    </subcellularLocation>
</comment>
<comment type="similarity">
    <text evidence="1">Belongs to the Ycf2 family.</text>
</comment>